<gene>
    <name evidence="2" type="primary">MTAP</name>
</gene>
<dbReference type="EC" id="2.4.2.28" evidence="2"/>
<dbReference type="RefSeq" id="NP_001248666.1">
    <property type="nucleotide sequence ID" value="NM_001261737.1"/>
</dbReference>
<dbReference type="SMR" id="F6RQL9"/>
<dbReference type="FunCoup" id="F6RQL9">
    <property type="interactions" value="1919"/>
</dbReference>
<dbReference type="STRING" id="9544.ENSMMUP00000050125"/>
<dbReference type="PaxDb" id="9544-ENSMMUP00000001509"/>
<dbReference type="Ensembl" id="ENSMMUT00000066525.2">
    <property type="protein sequence ID" value="ENSMMUP00000050125.2"/>
    <property type="gene ID" value="ENSMMUG00000001137.4"/>
</dbReference>
<dbReference type="GeneID" id="709020"/>
<dbReference type="KEGG" id="mcc:709020"/>
<dbReference type="CTD" id="4507"/>
<dbReference type="VEuPathDB" id="HostDB:ENSMMUG00000001137"/>
<dbReference type="VGNC" id="VGNC:103835">
    <property type="gene designation" value="MTAP"/>
</dbReference>
<dbReference type="eggNOG" id="KOG3985">
    <property type="taxonomic scope" value="Eukaryota"/>
</dbReference>
<dbReference type="GeneTree" id="ENSGT00950000182991"/>
<dbReference type="HOGENOM" id="CLU_054456_0_0_1"/>
<dbReference type="InParanoid" id="F6RQL9"/>
<dbReference type="OMA" id="ADPFCPE"/>
<dbReference type="OrthoDB" id="431409at2759"/>
<dbReference type="TreeFam" id="TF312883"/>
<dbReference type="UniPathway" id="UPA00904">
    <property type="reaction ID" value="UER00873"/>
</dbReference>
<dbReference type="Proteomes" id="UP000006718">
    <property type="component" value="Chromosome 15"/>
</dbReference>
<dbReference type="Bgee" id="ENSMMUG00000001137">
    <property type="expression patterns" value="Expressed in spermatid and 21 other cell types or tissues"/>
</dbReference>
<dbReference type="ExpressionAtlas" id="F6RQL9">
    <property type="expression patterns" value="baseline"/>
</dbReference>
<dbReference type="GO" id="GO:0005829">
    <property type="term" value="C:cytosol"/>
    <property type="evidence" value="ECO:0000318"/>
    <property type="project" value="GO_Central"/>
</dbReference>
<dbReference type="GO" id="GO:0005654">
    <property type="term" value="C:nucleoplasm"/>
    <property type="evidence" value="ECO:0007669"/>
    <property type="project" value="Ensembl"/>
</dbReference>
<dbReference type="GO" id="GO:0017061">
    <property type="term" value="F:S-methyl-5-thioadenosine phosphorylase activity"/>
    <property type="evidence" value="ECO:0000318"/>
    <property type="project" value="GO_Central"/>
</dbReference>
<dbReference type="GO" id="GO:0019509">
    <property type="term" value="P:L-methionine salvage from methylthioadenosine"/>
    <property type="evidence" value="ECO:0000318"/>
    <property type="project" value="GO_Central"/>
</dbReference>
<dbReference type="GO" id="GO:0032259">
    <property type="term" value="P:methylation"/>
    <property type="evidence" value="ECO:0007669"/>
    <property type="project" value="Ensembl"/>
</dbReference>
<dbReference type="GO" id="GO:0006166">
    <property type="term" value="P:purine ribonucleoside salvage"/>
    <property type="evidence" value="ECO:0007669"/>
    <property type="project" value="UniProtKB-KW"/>
</dbReference>
<dbReference type="CDD" id="cd09010">
    <property type="entry name" value="MTAP_SsMTAPII_like_MTIP"/>
    <property type="match status" value="1"/>
</dbReference>
<dbReference type="FunFam" id="3.40.50.1580:FF:000006">
    <property type="entry name" value="Purine nucleoside phosphorylase"/>
    <property type="match status" value="1"/>
</dbReference>
<dbReference type="Gene3D" id="3.40.50.1580">
    <property type="entry name" value="Nucleoside phosphorylase domain"/>
    <property type="match status" value="1"/>
</dbReference>
<dbReference type="HAMAP" id="MF_01963">
    <property type="entry name" value="MTAP"/>
    <property type="match status" value="1"/>
</dbReference>
<dbReference type="InterPro" id="IPR010044">
    <property type="entry name" value="MTAP"/>
</dbReference>
<dbReference type="InterPro" id="IPR000845">
    <property type="entry name" value="Nucleoside_phosphorylase_d"/>
</dbReference>
<dbReference type="InterPro" id="IPR035994">
    <property type="entry name" value="Nucleoside_phosphorylase_sf"/>
</dbReference>
<dbReference type="InterPro" id="IPR018099">
    <property type="entry name" value="Purine_phosphorylase-2_CS"/>
</dbReference>
<dbReference type="NCBIfam" id="TIGR01694">
    <property type="entry name" value="MTAP"/>
    <property type="match status" value="1"/>
</dbReference>
<dbReference type="PANTHER" id="PTHR42679">
    <property type="entry name" value="S-METHYL-5'-THIOADENOSINE PHOSPHORYLASE"/>
    <property type="match status" value="1"/>
</dbReference>
<dbReference type="PANTHER" id="PTHR42679:SF2">
    <property type="entry name" value="S-METHYL-5'-THIOADENOSINE PHOSPHORYLASE"/>
    <property type="match status" value="1"/>
</dbReference>
<dbReference type="Pfam" id="PF01048">
    <property type="entry name" value="PNP_UDP_1"/>
    <property type="match status" value="1"/>
</dbReference>
<dbReference type="SUPFAM" id="SSF53167">
    <property type="entry name" value="Purine and uridine phosphorylases"/>
    <property type="match status" value="1"/>
</dbReference>
<dbReference type="PROSITE" id="PS01240">
    <property type="entry name" value="PNP_MTAP_2"/>
    <property type="match status" value="1"/>
</dbReference>
<accession>F6RQL9</accession>
<evidence type="ECO:0000250" key="1">
    <source>
        <dbReference type="UniProtKB" id="Q9CQ65"/>
    </source>
</evidence>
<evidence type="ECO:0000255" key="2">
    <source>
        <dbReference type="HAMAP-Rule" id="MF_03155"/>
    </source>
</evidence>
<sequence>MASGTTTTAVKIGIIGGTGLDDPEILEGRTEKYVDTPFGKPSDALILGKIKNVDCVLLARHGRQHTIMPSKVNYQANIWALKEEGCTHVIVTTACGSLREEIQPGDIVIIDQFIDRTTMRPQSFYDGSHSCARGVCHIPMAEPFCPKTREVLIETAKKLGLRCHSKGTMVTIEGPRFSSRAESFMFRTWGADVINMTTVPEVVLAKEAGICYASIAMATDYDCWKEHEEAVSVDRVLKTLKENANKAKSLLLTTIPQIGSTEWSETLHNLKNMAQFSVLLPRH</sequence>
<protein>
    <recommendedName>
        <fullName evidence="2">S-methyl-5'-thioadenosine phosphorylase</fullName>
        <ecNumber evidence="2">2.4.2.28</ecNumber>
    </recommendedName>
    <alternativeName>
        <fullName evidence="2">5'-methylthioadenosine phosphorylase</fullName>
        <shortName evidence="2">MTA phosphorylase</shortName>
        <shortName evidence="2">MTAP</shortName>
        <shortName evidence="2">MTAPase</shortName>
    </alternativeName>
</protein>
<feature type="chain" id="PRO_0000415113" description="S-methyl-5'-thioadenosine phosphorylase">
    <location>
        <begin position="1"/>
        <end position="283"/>
    </location>
</feature>
<feature type="binding site" evidence="2">
    <location>
        <position position="18"/>
    </location>
    <ligand>
        <name>phosphate</name>
        <dbReference type="ChEBI" id="CHEBI:43474"/>
    </ligand>
</feature>
<feature type="binding site" evidence="2">
    <location>
        <begin position="60"/>
        <end position="61"/>
    </location>
    <ligand>
        <name>phosphate</name>
        <dbReference type="ChEBI" id="CHEBI:43474"/>
    </ligand>
</feature>
<feature type="binding site" evidence="2">
    <location>
        <begin position="93"/>
        <end position="94"/>
    </location>
    <ligand>
        <name>phosphate</name>
        <dbReference type="ChEBI" id="CHEBI:43474"/>
    </ligand>
</feature>
<feature type="binding site" evidence="2">
    <location>
        <position position="196"/>
    </location>
    <ligand>
        <name>substrate</name>
    </ligand>
</feature>
<feature type="binding site" evidence="2">
    <location>
        <position position="197"/>
    </location>
    <ligand>
        <name>phosphate</name>
        <dbReference type="ChEBI" id="CHEBI:43474"/>
    </ligand>
</feature>
<feature type="binding site" evidence="2">
    <location>
        <begin position="220"/>
        <end position="222"/>
    </location>
    <ligand>
        <name>substrate</name>
    </ligand>
</feature>
<feature type="site" description="Important for substrate specificity" evidence="2">
    <location>
        <position position="178"/>
    </location>
</feature>
<feature type="site" description="Important for substrate specificity" evidence="2">
    <location>
        <position position="233"/>
    </location>
</feature>
<feature type="modified residue" description="N6-acetyllysine" evidence="1">
    <location>
        <position position="51"/>
    </location>
</feature>
<comment type="function">
    <text evidence="2">Catalyzes the reversible phosphorylation of S-methyl-5'-thioadenosine (MTA) to adenine and 5-methylthioribose-1-phosphate. Involved in the breakdown of MTA, a major by-product of polyamine biosynthesis. Responsible for the first step in the methionine salvage pathway after MTA has been generated from S-adenosylmethionine. Has broad substrate specificity with 6-aminopurine nucleosides as preferred substrates.</text>
</comment>
<comment type="catalytic activity">
    <reaction evidence="2">
        <text>S-methyl-5'-thioadenosine + phosphate = 5-(methylsulfanyl)-alpha-D-ribose 1-phosphate + adenine</text>
        <dbReference type="Rhea" id="RHEA:11852"/>
        <dbReference type="ChEBI" id="CHEBI:16708"/>
        <dbReference type="ChEBI" id="CHEBI:17509"/>
        <dbReference type="ChEBI" id="CHEBI:43474"/>
        <dbReference type="ChEBI" id="CHEBI:58533"/>
        <dbReference type="EC" id="2.4.2.28"/>
    </reaction>
</comment>
<comment type="pathway">
    <text evidence="2">Amino-acid biosynthesis; L-methionine biosynthesis via salvage pathway; S-methyl-5-thio-alpha-D-ribose 1-phosphate from S-methyl-5'-thioadenosine (phosphorylase route): step 1/1.</text>
</comment>
<comment type="subunit">
    <text evidence="2">Homotrimer.</text>
</comment>
<comment type="subcellular location">
    <subcellularLocation>
        <location evidence="2">Cytoplasm</location>
    </subcellularLocation>
    <subcellularLocation>
        <location evidence="2">Nucleus</location>
    </subcellularLocation>
</comment>
<comment type="similarity">
    <text evidence="2">Belongs to the PNP/MTAP phosphorylase family. MTAP subfamily.</text>
</comment>
<keyword id="KW-0007">Acetylation</keyword>
<keyword id="KW-0963">Cytoplasm</keyword>
<keyword id="KW-0328">Glycosyltransferase</keyword>
<keyword id="KW-0539">Nucleus</keyword>
<keyword id="KW-0660">Purine salvage</keyword>
<keyword id="KW-1185">Reference proteome</keyword>
<keyword id="KW-0808">Transferase</keyword>
<proteinExistence type="inferred from homology"/>
<organism>
    <name type="scientific">Macaca mulatta</name>
    <name type="common">Rhesus macaque</name>
    <dbReference type="NCBI Taxonomy" id="9544"/>
    <lineage>
        <taxon>Eukaryota</taxon>
        <taxon>Metazoa</taxon>
        <taxon>Chordata</taxon>
        <taxon>Craniata</taxon>
        <taxon>Vertebrata</taxon>
        <taxon>Euteleostomi</taxon>
        <taxon>Mammalia</taxon>
        <taxon>Eutheria</taxon>
        <taxon>Euarchontoglires</taxon>
        <taxon>Primates</taxon>
        <taxon>Haplorrhini</taxon>
        <taxon>Catarrhini</taxon>
        <taxon>Cercopithecidae</taxon>
        <taxon>Cercopithecinae</taxon>
        <taxon>Macaca</taxon>
    </lineage>
</organism>
<name>MTAP_MACMU</name>
<reference key="1">
    <citation type="journal article" date="2007" name="Science">
        <title>Evolutionary and biomedical insights from the rhesus macaque genome.</title>
        <authorList>
            <person name="Gibbs R.A."/>
            <person name="Rogers J."/>
            <person name="Katze M.G."/>
            <person name="Bumgarner R."/>
            <person name="Weinstock G.M."/>
            <person name="Mardis E.R."/>
            <person name="Remington K.A."/>
            <person name="Strausberg R.L."/>
            <person name="Venter J.C."/>
            <person name="Wilson R.K."/>
            <person name="Batzer M.A."/>
            <person name="Bustamante C.D."/>
            <person name="Eichler E.E."/>
            <person name="Hahn M.W."/>
            <person name="Hardison R.C."/>
            <person name="Makova K.D."/>
            <person name="Miller W."/>
            <person name="Milosavljevic A."/>
            <person name="Palermo R.E."/>
            <person name="Siepel A."/>
            <person name="Sikela J.M."/>
            <person name="Attaway T."/>
            <person name="Bell S."/>
            <person name="Bernard K.E."/>
            <person name="Buhay C.J."/>
            <person name="Chandrabose M.N."/>
            <person name="Dao M."/>
            <person name="Davis C."/>
            <person name="Delehaunty K.D."/>
            <person name="Ding Y."/>
            <person name="Dinh H.H."/>
            <person name="Dugan-Rocha S."/>
            <person name="Fulton L.A."/>
            <person name="Gabisi R.A."/>
            <person name="Garner T.T."/>
            <person name="Godfrey J."/>
            <person name="Hawes A.C."/>
            <person name="Hernandez J."/>
            <person name="Hines S."/>
            <person name="Holder M."/>
            <person name="Hume J."/>
            <person name="Jhangiani S.N."/>
            <person name="Joshi V."/>
            <person name="Khan Z.M."/>
            <person name="Kirkness E.F."/>
            <person name="Cree A."/>
            <person name="Fowler R.G."/>
            <person name="Lee S."/>
            <person name="Lewis L.R."/>
            <person name="Li Z."/>
            <person name="Liu Y.-S."/>
            <person name="Moore S.M."/>
            <person name="Muzny D."/>
            <person name="Nazareth L.V."/>
            <person name="Ngo D.N."/>
            <person name="Okwuonu G.O."/>
            <person name="Pai G."/>
            <person name="Parker D."/>
            <person name="Paul H.A."/>
            <person name="Pfannkoch C."/>
            <person name="Pohl C.S."/>
            <person name="Rogers Y.-H.C."/>
            <person name="Ruiz S.J."/>
            <person name="Sabo A."/>
            <person name="Santibanez J."/>
            <person name="Schneider B.W."/>
            <person name="Smith S.M."/>
            <person name="Sodergren E."/>
            <person name="Svatek A.F."/>
            <person name="Utterback T.R."/>
            <person name="Vattathil S."/>
            <person name="Warren W."/>
            <person name="White C.S."/>
            <person name="Chinwalla A.T."/>
            <person name="Feng Y."/>
            <person name="Halpern A.L."/>
            <person name="Hillier L.W."/>
            <person name="Huang X."/>
            <person name="Minx P."/>
            <person name="Nelson J.O."/>
            <person name="Pepin K.H."/>
            <person name="Qin X."/>
            <person name="Sutton G.G."/>
            <person name="Venter E."/>
            <person name="Walenz B.P."/>
            <person name="Wallis J.W."/>
            <person name="Worley K.C."/>
            <person name="Yang S.-P."/>
            <person name="Jones S.M."/>
            <person name="Marra M.A."/>
            <person name="Rocchi M."/>
            <person name="Schein J.E."/>
            <person name="Baertsch R."/>
            <person name="Clarke L."/>
            <person name="Csuros M."/>
            <person name="Glasscock J."/>
            <person name="Harris R.A."/>
            <person name="Havlak P."/>
            <person name="Jackson A.R."/>
            <person name="Jiang H."/>
            <person name="Liu Y."/>
            <person name="Messina D.N."/>
            <person name="Shen Y."/>
            <person name="Song H.X.-Z."/>
            <person name="Wylie T."/>
            <person name="Zhang L."/>
            <person name="Birney E."/>
            <person name="Han K."/>
            <person name="Konkel M.K."/>
            <person name="Lee J."/>
            <person name="Smit A.F.A."/>
            <person name="Ullmer B."/>
            <person name="Wang H."/>
            <person name="Xing J."/>
            <person name="Burhans R."/>
            <person name="Cheng Z."/>
            <person name="Karro J.E."/>
            <person name="Ma J."/>
            <person name="Raney B."/>
            <person name="She X."/>
            <person name="Cox M.J."/>
            <person name="Demuth J.P."/>
            <person name="Dumas L.J."/>
            <person name="Han S.-G."/>
            <person name="Hopkins J."/>
            <person name="Karimpour-Fard A."/>
            <person name="Kim Y.H."/>
            <person name="Pollack J.R."/>
            <person name="Vinar T."/>
            <person name="Addo-Quaye C."/>
            <person name="Degenhardt J."/>
            <person name="Denby A."/>
            <person name="Hubisz M.J."/>
            <person name="Indap A."/>
            <person name="Kosiol C."/>
            <person name="Lahn B.T."/>
            <person name="Lawson H.A."/>
            <person name="Marklein A."/>
            <person name="Nielsen R."/>
            <person name="Vallender E.J."/>
            <person name="Clark A.G."/>
            <person name="Ferguson B."/>
            <person name="Hernandez R.D."/>
            <person name="Hirani K."/>
            <person name="Kehrer-Sawatzki H."/>
            <person name="Kolb J."/>
            <person name="Patil S."/>
            <person name="Pu L.-L."/>
            <person name="Ren Y."/>
            <person name="Smith D.G."/>
            <person name="Wheeler D.A."/>
            <person name="Schenck I."/>
            <person name="Ball E.V."/>
            <person name="Chen R."/>
            <person name="Cooper D.N."/>
            <person name="Giardine B."/>
            <person name="Hsu F."/>
            <person name="Kent W.J."/>
            <person name="Lesk A."/>
            <person name="Nelson D.L."/>
            <person name="O'brien W.E."/>
            <person name="Pruefer K."/>
            <person name="Stenson P.D."/>
            <person name="Wallace J.C."/>
            <person name="Ke H."/>
            <person name="Liu X.-M."/>
            <person name="Wang P."/>
            <person name="Xiang A.P."/>
            <person name="Yang F."/>
            <person name="Barber G.P."/>
            <person name="Haussler D."/>
            <person name="Karolchik D."/>
            <person name="Kern A.D."/>
            <person name="Kuhn R.M."/>
            <person name="Smith K.E."/>
            <person name="Zwieg A.S."/>
        </authorList>
    </citation>
    <scope>NUCLEOTIDE SEQUENCE [LARGE SCALE GENOMIC DNA]</scope>
    <source>
        <strain>17573</strain>
    </source>
</reference>